<comment type="function">
    <text evidence="5 7 9">AMP/ATP-binding subunit of AMP-activated protein kinase (AMPK), an energy sensor protein kinase that plays a key role in regulating cellular energy metabolism (PubMed:14722619, PubMed:17878938, PubMed:24563466). In response to reduction of intracellular ATP levels, AMPK activates energy-producing pathways and inhibits energy-consuming processes: inhibits protein, carbohydrate and lipid biosynthesis, as well as cell growth and proliferation. AMPK acts via direct phosphorylation of metabolic enzymes, and by longer-term effects via phosphorylation of transcription regulators. AMPK also acts as a regulator of cellular polarity by remodeling the actin cytoskeleton; probably by indirectly activating myosin. The AMPK gamma3 subunit is a non-catalytic subunit with a regulatory role in muscle energy metabolism (PubMed:17878938). It mediates binding to AMP, ADP and ATP, leading to AMPK activation or inhibition: AMP-binding results in allosteric activation of alpha catalytic subunit (PRKAA1 or PRKAA2) both by inducing phosphorylation and preventing dephosphorylation of catalytic subunits. ADP also stimulates phosphorylation, without stimulating already phosphorylated catalytic subunit. ATP promotes dephosphorylation of catalytic subunit, rendering the AMPK enzyme inactive.</text>
</comment>
<comment type="subunit">
    <text evidence="1">AMPK is a heterotrimer of an alpha catalytic subunit (PRKAA1 or PRKAA2), a beta (PRKAB1 or PRKAB2) and a gamma non-catalytic subunits (PRKAG1, PRKAG2 or PRKAG3). Interacts with FNIP1 and FNIP2 (By similarity).</text>
</comment>
<comment type="interaction">
    <interactant intactId="EBI-7428853">
        <id>Q9UGI9</id>
    </interactant>
    <interactant intactId="EBI-1048945">
        <id>Q3LI72</id>
        <label>KRTAP19-5</label>
    </interactant>
    <organismsDiffer>false</organismsDiffer>
    <experiments>3</experiments>
</comment>
<comment type="interaction">
    <interactant intactId="EBI-7428853">
        <id>Q9UGI9</id>
    </interactant>
    <interactant intactId="EBI-1053424">
        <id>O43741</id>
        <label>PRKAB2</label>
    </interactant>
    <organismsDiffer>false</organismsDiffer>
    <experiments>7</experiments>
</comment>
<comment type="alternative products">
    <event type="alternative splicing"/>
    <isoform>
        <id>Q9UGI9-1</id>
        <name>1</name>
        <sequence type="displayed"/>
    </isoform>
    <isoform>
        <id>Q9UGI9-2</id>
        <name>2</name>
        <sequence type="described" ref="VSP_015587"/>
    </isoform>
</comment>
<comment type="tissue specificity">
    <text>Skeletal muscle, with weak expression in heart and pancreas.</text>
</comment>
<comment type="domain">
    <text>The AMPK pseudosubstrate motif resembles the sequence around sites phosphorylated on target proteins of AMPK, except the presence of a non-phosphorylatable residue in place of Ser. In the absence of AMP this pseudosubstrate sequence may bind to the active site groove on the alpha subunit (PRKAA1 or PRKAA2), preventing phosphorylation by the upstream activating kinase STK11/LKB1.</text>
</comment>
<comment type="domain">
    <text evidence="2">The 4 CBS domains mediate binding to nucleotides. Of the 4 potential nucleotide-binding sites, 3 are occupied, designated as sites 1, 3, and 4 based on the CBS modules that provide the acidic residue for coordination with the 2'- and 3'-hydroxyl groups of the ribose of AMP. Of these, site 4 appears to be a structural site that retains a tightly held AMP molecule (AMP 3). The 2 remaining sites, 1 and 3, can bind either AMP, ADP or ATP. Site 1 (AMP, ADP or ATP 1) is the high-affinity binding site and likely accommodates AMP or ADP. Site 3 (AMP, ADP or ATP 2) is the weakest nucleotide-binding site on the gamma subunit, yet it is exquisitely sensitive to changes in nucleotide levels and this allows AMPK to respond rapidly to changes in cellular energy status. Site 3 is likely to be responsible for protection of a conserved threonine in the activation loop of the alpha catalytic subunit through conformational changes induced by binding of AMP or ADP.</text>
</comment>
<comment type="PTM">
    <text evidence="8">Phosphorylated by ULK1; leading to negatively regulate AMPK activity and suggesting the existence of a regulatory feedback loop between ULK1 and AMPK.</text>
</comment>
<comment type="PTM">
    <text evidence="9">Glycosylated; O-GlcNAcylated by OGT, promoting the AMP-activated protein kinase (AMPK) activity.</text>
</comment>
<comment type="polymorphism">
    <text evidence="7">Genetic variation in PRKAG3 defines the skeletal muscle glycogen content and metabolism quantitative trait locus (SMGMQTL) [MIM:619030]. Muscle fibers from carriers of variant Trp-225 have approximately 90% more muscle glycogen content than controls and decreased levels of intramuscular triglyceride.</text>
</comment>
<comment type="similarity">
    <text evidence="11">Belongs to the 5'-AMP-activated protein kinase gamma subunit family.</text>
</comment>
<feature type="chain" id="PRO_0000204384" description="5'-AMP-activated protein kinase subunit gamma-3">
    <location>
        <begin position="1"/>
        <end position="489"/>
    </location>
</feature>
<feature type="domain" description="CBS 1" evidence="3">
    <location>
        <begin position="197"/>
        <end position="258"/>
    </location>
</feature>
<feature type="domain" description="CBS 2" evidence="3">
    <location>
        <begin position="280"/>
        <end position="340"/>
    </location>
</feature>
<feature type="domain" description="CBS 3" evidence="3">
    <location>
        <begin position="355"/>
        <end position="415"/>
    </location>
</feature>
<feature type="domain" description="CBS 4" evidence="3">
    <location>
        <begin position="427"/>
        <end position="486"/>
    </location>
</feature>
<feature type="region of interest" description="Disordered" evidence="4">
    <location>
        <begin position="1"/>
        <end position="113"/>
    </location>
</feature>
<feature type="short sequence motif" description="AMPK pseudosubstrate">
    <location>
        <begin position="293"/>
        <end position="314"/>
    </location>
</feature>
<feature type="compositionally biased region" description="Low complexity" evidence="4">
    <location>
        <begin position="34"/>
        <end position="46"/>
    </location>
</feature>
<feature type="compositionally biased region" description="Basic residues" evidence="4">
    <location>
        <begin position="50"/>
        <end position="62"/>
    </location>
</feature>
<feature type="binding site" evidence="2">
    <location>
        <position position="225"/>
    </location>
    <ligand>
        <name>ADP</name>
        <dbReference type="ChEBI" id="CHEBI:456216"/>
        <label>2</label>
    </ligand>
</feature>
<feature type="binding site" evidence="2">
    <location>
        <position position="225"/>
    </location>
    <ligand>
        <name>AMP</name>
        <dbReference type="ChEBI" id="CHEBI:456215"/>
        <label>2</label>
    </ligand>
</feature>
<feature type="binding site" evidence="2">
    <location>
        <position position="225"/>
    </location>
    <ligand>
        <name>ATP</name>
        <dbReference type="ChEBI" id="CHEBI:30616"/>
        <label>1</label>
    </ligand>
</feature>
<feature type="binding site" evidence="2">
    <location>
        <position position="225"/>
    </location>
    <ligand>
        <name>ATP</name>
        <dbReference type="ChEBI" id="CHEBI:30616"/>
        <label>2</label>
    </ligand>
</feature>
<feature type="binding site" evidence="2">
    <location>
        <begin position="240"/>
        <end position="245"/>
    </location>
    <ligand>
        <name>ADP</name>
        <dbReference type="ChEBI" id="CHEBI:456216"/>
        <label>1</label>
    </ligand>
</feature>
<feature type="binding site" evidence="2">
    <location>
        <begin position="240"/>
        <end position="245"/>
    </location>
    <ligand>
        <name>AMP</name>
        <dbReference type="ChEBI" id="CHEBI:456215"/>
        <label>1</label>
    </ligand>
</feature>
<feature type="binding site" evidence="2">
    <location>
        <begin position="240"/>
        <end position="245"/>
    </location>
    <ligand>
        <name>ATP</name>
        <dbReference type="ChEBI" id="CHEBI:30616"/>
        <label>1</label>
    </ligand>
</feature>
<feature type="binding site" evidence="2">
    <location>
        <position position="285"/>
    </location>
    <ligand>
        <name>ADP</name>
        <dbReference type="ChEBI" id="CHEBI:456216"/>
        <label>1</label>
    </ligand>
</feature>
<feature type="binding site" evidence="2">
    <location>
        <position position="285"/>
    </location>
    <ligand>
        <name>AMP</name>
        <dbReference type="ChEBI" id="CHEBI:456215"/>
        <label>1</label>
    </ligand>
</feature>
<feature type="binding site" evidence="2">
    <location>
        <position position="285"/>
    </location>
    <ligand>
        <name>ATP</name>
        <dbReference type="ChEBI" id="CHEBI:30616"/>
        <label>1</label>
    </ligand>
</feature>
<feature type="binding site" evidence="2">
    <location>
        <begin position="306"/>
        <end position="307"/>
    </location>
    <ligand>
        <name>ADP</name>
        <dbReference type="ChEBI" id="CHEBI:456216"/>
        <label>1</label>
    </ligand>
</feature>
<feature type="binding site" evidence="2">
    <location>
        <begin position="306"/>
        <end position="307"/>
    </location>
    <ligand>
        <name>AMP</name>
        <dbReference type="ChEBI" id="CHEBI:456215"/>
        <label>1</label>
    </ligand>
</feature>
<feature type="binding site" evidence="2">
    <location>
        <begin position="306"/>
        <end position="307"/>
    </location>
    <ligand>
        <name>ATP</name>
        <dbReference type="ChEBI" id="CHEBI:30616"/>
        <label>1</label>
    </ligand>
</feature>
<feature type="binding site" evidence="2">
    <location>
        <position position="306"/>
    </location>
    <ligand>
        <name>AMP</name>
        <dbReference type="ChEBI" id="CHEBI:456215"/>
        <label>3</label>
    </ligand>
</feature>
<feature type="binding site" evidence="2">
    <location>
        <position position="307"/>
    </location>
    <ligand>
        <name>ATP</name>
        <dbReference type="ChEBI" id="CHEBI:30616"/>
        <label>2</label>
    </ligand>
</feature>
<feature type="binding site" evidence="2">
    <location>
        <position position="325"/>
    </location>
    <ligand>
        <name>ADP</name>
        <dbReference type="ChEBI" id="CHEBI:456216"/>
        <label>2</label>
    </ligand>
</feature>
<feature type="binding site" evidence="2">
    <location>
        <position position="325"/>
    </location>
    <ligand>
        <name>AMP</name>
        <dbReference type="ChEBI" id="CHEBI:456215"/>
        <label>2</label>
    </ligand>
</feature>
<feature type="binding site" evidence="2">
    <location>
        <position position="325"/>
    </location>
    <ligand>
        <name>ATP</name>
        <dbReference type="ChEBI" id="CHEBI:30616"/>
        <label>2</label>
    </ligand>
</feature>
<feature type="binding site" evidence="2">
    <location>
        <position position="355"/>
    </location>
    <ligand>
        <name>AMP</name>
        <dbReference type="ChEBI" id="CHEBI:456215"/>
        <label>3</label>
    </ligand>
</feature>
<feature type="binding site" evidence="2">
    <location>
        <position position="360"/>
    </location>
    <ligand>
        <name>AMP</name>
        <dbReference type="ChEBI" id="CHEBI:456215"/>
        <label>3</label>
    </ligand>
</feature>
<feature type="binding site" evidence="2">
    <location>
        <begin position="381"/>
        <end position="382"/>
    </location>
    <ligand>
        <name>AMP</name>
        <dbReference type="ChEBI" id="CHEBI:456215"/>
        <label>3</label>
    </ligand>
</feature>
<feature type="binding site" evidence="2">
    <location>
        <begin position="397"/>
        <end position="400"/>
    </location>
    <ligand>
        <name>ADP</name>
        <dbReference type="ChEBI" id="CHEBI:456216"/>
        <label>2</label>
    </ligand>
</feature>
<feature type="binding site" evidence="2">
    <location>
        <begin position="397"/>
        <end position="400"/>
    </location>
    <ligand>
        <name>AMP</name>
        <dbReference type="ChEBI" id="CHEBI:456215"/>
        <label>2</label>
    </ligand>
</feature>
<feature type="binding site" evidence="2">
    <location>
        <begin position="397"/>
        <end position="400"/>
    </location>
    <ligand>
        <name>ATP</name>
        <dbReference type="ChEBI" id="CHEBI:30616"/>
        <label>2</label>
    </ligand>
</feature>
<feature type="binding site" evidence="2">
    <location>
        <position position="424"/>
    </location>
    <ligand>
        <name>ADP</name>
        <dbReference type="ChEBI" id="CHEBI:456216"/>
        <label>2</label>
    </ligand>
</feature>
<feature type="binding site" evidence="2">
    <location>
        <position position="424"/>
    </location>
    <ligand>
        <name>AMP</name>
        <dbReference type="ChEBI" id="CHEBI:456215"/>
        <label>2</label>
    </ligand>
</feature>
<feature type="binding site" evidence="2">
    <location>
        <position position="424"/>
    </location>
    <ligand>
        <name>ATP</name>
        <dbReference type="ChEBI" id="CHEBI:30616"/>
        <label>2</label>
    </ligand>
</feature>
<feature type="binding site" evidence="2">
    <location>
        <position position="432"/>
    </location>
    <ligand>
        <name>ADP</name>
        <dbReference type="ChEBI" id="CHEBI:456216"/>
        <label>2</label>
    </ligand>
</feature>
<feature type="binding site" evidence="2">
    <location>
        <position position="432"/>
    </location>
    <ligand>
        <name>AMP</name>
        <dbReference type="ChEBI" id="CHEBI:456215"/>
        <label>2</label>
    </ligand>
</feature>
<feature type="binding site" evidence="2">
    <location>
        <position position="432"/>
    </location>
    <ligand>
        <name>ATP</name>
        <dbReference type="ChEBI" id="CHEBI:30616"/>
        <label>2</label>
    </ligand>
</feature>
<feature type="binding site" evidence="2">
    <location>
        <begin position="453"/>
        <end position="454"/>
    </location>
    <ligand>
        <name>ADP</name>
        <dbReference type="ChEBI" id="CHEBI:456216"/>
        <label>2</label>
    </ligand>
</feature>
<feature type="binding site" evidence="2">
    <location>
        <begin position="453"/>
        <end position="454"/>
    </location>
    <ligand>
        <name>AMP</name>
        <dbReference type="ChEBI" id="CHEBI:456215"/>
        <label>2</label>
    </ligand>
</feature>
<feature type="binding site" evidence="2">
    <location>
        <begin position="453"/>
        <end position="454"/>
    </location>
    <ligand>
        <name>ATP</name>
        <dbReference type="ChEBI" id="CHEBI:30616"/>
        <label>2</label>
    </ligand>
</feature>
<feature type="binding site" evidence="2">
    <location>
        <position position="453"/>
    </location>
    <ligand>
        <name>AMP</name>
        <dbReference type="ChEBI" id="CHEBI:456215"/>
        <label>3</label>
    </ligand>
</feature>
<feature type="binding site" evidence="2">
    <location>
        <begin position="469"/>
        <end position="472"/>
    </location>
    <ligand>
        <name>AMP</name>
        <dbReference type="ChEBI" id="CHEBI:456215"/>
        <label>3</label>
    </ligand>
</feature>
<feature type="splice variant" id="VSP_015587" description="In isoform 2." evidence="10">
    <location>
        <begin position="1"/>
        <end position="25"/>
    </location>
</feature>
<feature type="sequence variant" id="VAR_023484" description="In dbSNP:rs692243." evidence="6 7">
    <original>P</original>
    <variation>A</variation>
    <location>
        <position position="71"/>
    </location>
</feature>
<feature type="sequence variant" id="VAR_069470" description="In dbSNP:rs864622003." evidence="7">
    <original>E</original>
    <variation>Q</variation>
    <location>
        <position position="76"/>
    </location>
</feature>
<feature type="sequence variant" id="VAR_069471" description="In dbSNP:rs371222838." evidence="7">
    <original>D</original>
    <variation>G</variation>
    <location>
        <position position="103"/>
    </location>
</feature>
<feature type="sequence variant" id="VAR_069472" description="In dbSNP:rs864622004." evidence="7">
    <original>G</original>
    <variation>V</variation>
    <location>
        <position position="113"/>
    </location>
</feature>
<feature type="sequence variant" id="VAR_048251" description="In dbSNP:rs35050588." evidence="7">
    <original>L</original>
    <variation>V</variation>
    <location>
        <position position="153"/>
    </location>
</feature>
<feature type="sequence variant" id="VAR_069473" description="In dbSNP:rs962993719." evidence="7">
    <original>L</original>
    <variation>P</variation>
    <location>
        <position position="161"/>
    </location>
</feature>
<feature type="sequence variant" id="VAR_069474" description="In dbSNP:rs200004875." evidence="7">
    <original>G</original>
    <variation>S</variation>
    <location>
        <position position="171"/>
    </location>
</feature>
<feature type="sequence variant" id="VAR_069475" description="In dbSNP:rs372752820." evidence="7">
    <original>G</original>
    <variation>S</variation>
    <location>
        <position position="180"/>
    </location>
</feature>
<feature type="sequence variant" id="VAR_069476" description="In dbSNP:rs776255177." evidence="7">
    <original>M</original>
    <variation>T</variation>
    <location>
        <position position="197"/>
    </location>
</feature>
<feature type="sequence variant" id="VAR_069477" description="In dbSNP:rs776263291." evidence="7">
    <original>E</original>
    <variation>Q</variation>
    <location>
        <position position="211"/>
    </location>
</feature>
<feature type="sequence variant" id="VAR_069478" description="In dbSNP:rs370008874." evidence="7">
    <original>R</original>
    <variation>Q</variation>
    <location>
        <position position="225"/>
    </location>
</feature>
<feature type="sequence variant" id="VAR_069479" description="Associated with increased glycogen content and metabolism in skeletal muscle; results in increased basal and AMP-activated AMPK activity; dbSNP:rs138130157." evidence="7">
    <original>R</original>
    <variation>W</variation>
    <location>
        <position position="225"/>
    </location>
</feature>
<feature type="sequence variant" id="VAR_069480" description="In dbSNP:rs41272689." evidence="7">
    <original>Q</original>
    <variation>R</variation>
    <location>
        <position position="260"/>
    </location>
</feature>
<feature type="sequence variant" id="VAR_069481" description="In dbSNP:rs367916025." evidence="7">
    <original>I</original>
    <variation>T</variation>
    <location>
        <position position="269"/>
    </location>
</feature>
<feature type="sequence variant" id="VAR_069482" description="In dbSNP:rs864622005." evidence="7">
    <original>R</original>
    <variation>C</variation>
    <location>
        <position position="307"/>
    </location>
</feature>
<feature type="sequence variant" id="VAR_069483" description="In dbSNP:rs551272603." evidence="7">
    <original>R</original>
    <variation>Q</variation>
    <location>
        <position position="340"/>
    </location>
</feature>
<feature type="sequence variant" id="VAR_048252" description="In dbSNP:rs33985460." evidence="7">
    <original>R</original>
    <variation>W</variation>
    <location>
        <position position="340"/>
    </location>
</feature>
<feature type="sequence variant" id="VAR_069484" description="In dbSNP:rs200750014." evidence="7">
    <original>R</original>
    <variation>M</variation>
    <location>
        <position position="446"/>
    </location>
</feature>
<feature type="sequence variant" id="VAR_069485" description="In dbSNP:rs34720726." evidence="7">
    <original>A</original>
    <variation>V</variation>
    <location>
        <position position="482"/>
    </location>
</feature>
<feature type="sequence variant" id="VAR_069486" description="In dbSNP:rs149508864." evidence="7">
    <original>D</original>
    <variation>N</variation>
    <location>
        <position position="485"/>
    </location>
</feature>
<feature type="sequence conflict" description="In Ref. 2; AAF73987." evidence="11" ref="2">
    <original>A</original>
    <variation>T</variation>
    <location>
        <position position="83"/>
    </location>
</feature>
<feature type="sequence conflict" description="In Ref. 1; CAB65117." evidence="11" ref="1">
    <original>MQ</original>
    <variation>IE</variation>
    <location>
        <begin position="188"/>
        <end position="189"/>
    </location>
</feature>
<feature type="sequence conflict" description="In Ref. 1; CAB65117." evidence="11" ref="1">
    <original>Q</original>
    <variation>K</variation>
    <location>
        <position position="423"/>
    </location>
</feature>
<feature type="sequence conflict" description="In Ref. 1; CAB65117." evidence="11" ref="1">
    <original>ALGA</original>
    <variation>PSGPEKI</variation>
    <location>
        <begin position="486"/>
        <end position="489"/>
    </location>
</feature>
<reference key="1">
    <citation type="journal article" date="2000" name="Biochem. J.">
        <title>Characterization of AMP-activated protein kinase gamma-subunit isoforms and their role in AMP binding.</title>
        <authorList>
            <person name="Cheung P.C.F."/>
            <person name="Salt I.P."/>
            <person name="Davies S.P."/>
            <person name="Hardie D.G."/>
            <person name="Carling D."/>
        </authorList>
    </citation>
    <scope>NUCLEOTIDE SEQUENCE [MRNA] (ISOFORM 1)</scope>
</reference>
<reference key="2">
    <citation type="journal article" date="2000" name="Science">
        <title>A mutation in PRKAG3 associated with excess glycogen content in pig skeletal muscle.</title>
        <authorList>
            <person name="Milan D."/>
            <person name="Jeon J.-T."/>
            <person name="Looft C."/>
            <person name="Amarger V."/>
            <person name="Robic A."/>
            <person name="Thelander M."/>
            <person name="Rogel-Gaillard C."/>
            <person name="Paul S."/>
            <person name="Iannuccelli N."/>
            <person name="Rask L."/>
            <person name="Ronne H."/>
            <person name="Lundstroem K."/>
            <person name="Reinsch N."/>
            <person name="Gellin J."/>
            <person name="Kalm E."/>
            <person name="Le Roy P."/>
            <person name="Chardon P."/>
            <person name="Andersson L."/>
        </authorList>
    </citation>
    <scope>NUCLEOTIDE SEQUENCE [MRNA] (ISOFORM 2)</scope>
    <source>
        <tissue>Skeletal muscle</tissue>
    </source>
</reference>
<reference key="3">
    <citation type="journal article" date="2004" name="Genome Res.">
        <title>The status, quality, and expansion of the NIH full-length cDNA project: the Mammalian Gene Collection (MGC).</title>
        <authorList>
            <consortium name="The MGC Project Team"/>
        </authorList>
    </citation>
    <scope>NUCLEOTIDE SEQUENCE [LARGE SCALE MRNA] (ISOFORM 1)</scope>
    <scope>VARIANT ALA-71</scope>
</reference>
<reference key="4">
    <citation type="journal article" date="2004" name="J. Clin. Invest.">
        <title>CBS domains form energy-sensing modules whose binding of adenosine ligands is disrupted by disease mutations.</title>
        <authorList>
            <person name="Scott J.W."/>
            <person name="Hawley S.A."/>
            <person name="Green K.A."/>
            <person name="Anis M."/>
            <person name="Stewart G."/>
            <person name="Scullion G.A."/>
            <person name="Norman D.G."/>
            <person name="Hardie D.G."/>
        </authorList>
    </citation>
    <scope>DOMAIN CBS</scope>
    <scope>AMP-BINDING</scope>
    <scope>ATP-BINDING</scope>
    <scope>FUNCTION</scope>
</reference>
<reference key="5">
    <citation type="journal article" date="2007" name="EMBO J.">
        <title>Regulation of AMP-activated protein kinase by a pseudosubstrate sequence on the gamma subunit.</title>
        <authorList>
            <person name="Scott J.W."/>
            <person name="Ross F.A."/>
            <person name="Liu J.K."/>
            <person name="Hardie D.G."/>
        </authorList>
    </citation>
    <scope>DOMAIN AMPK PSEUDOSUBSTRATE</scope>
</reference>
<reference key="6">
    <citation type="journal article" date="2007" name="Circ. Res.">
        <title>AMP-activated protein kinase in metabolic control and insulin signaling.</title>
        <authorList>
            <person name="Towler M.C."/>
            <person name="Hardie D.G."/>
        </authorList>
    </citation>
    <scope>REVIEW ON FUNCTION</scope>
</reference>
<reference key="7">
    <citation type="journal article" date="2007" name="Nat. Rev. Mol. Cell Biol.">
        <title>AMP-activated/SNF1 protein kinases: conserved guardians of cellular energy.</title>
        <authorList>
            <person name="Hardie D.G."/>
        </authorList>
    </citation>
    <scope>REVIEW ON FUNCTION</scope>
</reference>
<reference key="8">
    <citation type="journal article" date="2011" name="Autophagy">
        <title>Ulk1-mediated phosphorylation of AMPK constitutes a negative regulatory feedback loop.</title>
        <authorList>
            <person name="Loffler A.S."/>
            <person name="Alers S."/>
            <person name="Dieterle A.M."/>
            <person name="Keppeler H."/>
            <person name="Franz-Wachtel M."/>
            <person name="Kundu M."/>
            <person name="Campbell D.G."/>
            <person name="Wesselborg S."/>
            <person name="Alessi D.R."/>
            <person name="Stork B."/>
        </authorList>
    </citation>
    <scope>PHOSPHORYLATION BY ULK1</scope>
</reference>
<reference key="9">
    <citation type="journal article" date="2014" name="J. Biol. Chem.">
        <title>Cross-talk between two essential nutrient-sensitive enzymes: O-GlcNAc transferase (OGT) and AMP-activated protein kinase (AMPK).</title>
        <authorList>
            <person name="Bullen J.W."/>
            <person name="Balsbaugh J.L."/>
            <person name="Chanda D."/>
            <person name="Shabanowitz J."/>
            <person name="Hunt D.F."/>
            <person name="Neumann D."/>
            <person name="Hart G.W."/>
        </authorList>
    </citation>
    <scope>FUNCTION</scope>
    <scope>GLYCOSYLATION</scope>
</reference>
<reference key="10">
    <citation type="journal article" date="2007" name="PLoS ONE">
        <title>Gain-of-function R225W mutation in human AMPKgamma(3) causing increased glycogen and decreased triglyceride in skeletal muscle.</title>
        <authorList>
            <person name="Costford S.R."/>
            <person name="Kavaslar N."/>
            <person name="Ahituv N."/>
            <person name="Chaudhry S.N."/>
            <person name="Schackwitz W.S."/>
            <person name="Dent R."/>
            <person name="Pennacchio L.A."/>
            <person name="McPherson R."/>
            <person name="Harper M.E."/>
        </authorList>
    </citation>
    <scope>VARIANTS ALA-71; GLN-76; GLY-103; VAL-113; VAL-153; PRO-161; SER-171; SER-180; THR-197; GLN-211; GLN-225; TRP-225; ARG-260; THR-269; CYS-307; GLN-340; TRP-340; MET-446; VAL-482 AND ASN-485</scope>
    <scope>INVOLVEMENT IN SMGMQTL</scope>
    <scope>FUNCTION</scope>
    <scope>CHARACTERIZATION OF VARIANT TRP-225</scope>
</reference>
<keyword id="KW-0025">Alternative splicing</keyword>
<keyword id="KW-0067">ATP-binding</keyword>
<keyword id="KW-0129">CBS domain</keyword>
<keyword id="KW-0275">Fatty acid biosynthesis</keyword>
<keyword id="KW-0276">Fatty acid metabolism</keyword>
<keyword id="KW-0325">Glycoprotein</keyword>
<keyword id="KW-0444">Lipid biosynthesis</keyword>
<keyword id="KW-0443">Lipid metabolism</keyword>
<keyword id="KW-0547">Nucleotide-binding</keyword>
<keyword id="KW-0597">Phosphoprotein</keyword>
<keyword id="KW-1267">Proteomics identification</keyword>
<keyword id="KW-1185">Reference proteome</keyword>
<keyword id="KW-0677">Repeat</keyword>
<name>AAKG3_HUMAN</name>
<organism>
    <name type="scientific">Homo sapiens</name>
    <name type="common">Human</name>
    <dbReference type="NCBI Taxonomy" id="9606"/>
    <lineage>
        <taxon>Eukaryota</taxon>
        <taxon>Metazoa</taxon>
        <taxon>Chordata</taxon>
        <taxon>Craniata</taxon>
        <taxon>Vertebrata</taxon>
        <taxon>Euteleostomi</taxon>
        <taxon>Mammalia</taxon>
        <taxon>Eutheria</taxon>
        <taxon>Euarchontoglires</taxon>
        <taxon>Primates</taxon>
        <taxon>Haplorrhini</taxon>
        <taxon>Catarrhini</taxon>
        <taxon>Hominidae</taxon>
        <taxon>Homo</taxon>
    </lineage>
</organism>
<proteinExistence type="evidence at protein level"/>
<gene>
    <name type="primary">PRKAG3</name>
    <name type="synonym">AMPKG3</name>
</gene>
<evidence type="ECO:0000250" key="1"/>
<evidence type="ECO:0000250" key="2">
    <source>
        <dbReference type="UniProtKB" id="P80385"/>
    </source>
</evidence>
<evidence type="ECO:0000255" key="3">
    <source>
        <dbReference type="PROSITE-ProRule" id="PRU00703"/>
    </source>
</evidence>
<evidence type="ECO:0000256" key="4">
    <source>
        <dbReference type="SAM" id="MobiDB-lite"/>
    </source>
</evidence>
<evidence type="ECO:0000269" key="5">
    <source>
    </source>
</evidence>
<evidence type="ECO:0000269" key="6">
    <source>
    </source>
</evidence>
<evidence type="ECO:0000269" key="7">
    <source>
    </source>
</evidence>
<evidence type="ECO:0000269" key="8">
    <source>
    </source>
</evidence>
<evidence type="ECO:0000269" key="9">
    <source>
    </source>
</evidence>
<evidence type="ECO:0000303" key="10">
    <source>
    </source>
</evidence>
<evidence type="ECO:0000305" key="11"/>
<accession>Q9UGI9</accession>
<accession>Q4QQG8</accession>
<accession>Q4V779</accession>
<accession>Q9NRL1</accession>
<protein>
    <recommendedName>
        <fullName>5'-AMP-activated protein kinase subunit gamma-3</fullName>
        <shortName>AMPK gamma3</shortName>
        <shortName>AMPK subunit gamma-3</shortName>
    </recommendedName>
</protein>
<sequence length="489" mass="54258">MEPGLEHALRRTPSWSSLGGSEHQEMSFLEQENSSSWPSPAVTSSSERIRGKRRAKALRWTRQKSVEEGEPPGQGEGPRSRPAAESTGLEATFPKTTPLAQADPAGVGTPPTGWDCLPSDCTASAAGSSTDDVELATEFPATEAWECELEGLLEERPALCLSPQAPFPKLGWDDELRKPGAQIYMRFMQEHTCYDAMATSSKLVIFDTMLEIKKAFFALVANGVRAAPLWDSKKQSFVGMLTITDFILVLHRYYRSPLVQIYEIEQHKIETWREIYLQGCFKPLVSISPNDSLFEAVYTLIKNRIHRLPVLDPVSGNVLHILTHKRLLKFLHIFGSLLPRPSFLYRTIQDLGIGTFRDLAVVLETAPILTALDIFVDRRVSALPVVNECGQVVGLYSRFDVIHLAAQQTYNHLDMSVGEALRQRTLCLEGVLSCQPHESLGEVIDRIAREQVHRLVLVDETQHLLGVVSLSDILQALVLSPAGIDALGA</sequence>
<dbReference type="EMBL" id="AJ249977">
    <property type="protein sequence ID" value="CAB65117.1"/>
    <property type="molecule type" value="mRNA"/>
</dbReference>
<dbReference type="EMBL" id="AF214519">
    <property type="protein sequence ID" value="AAF73987.1"/>
    <property type="molecule type" value="mRNA"/>
</dbReference>
<dbReference type="EMBL" id="BC098102">
    <property type="protein sequence ID" value="AAH98102.1"/>
    <property type="molecule type" value="mRNA"/>
</dbReference>
<dbReference type="EMBL" id="BC098255">
    <property type="protein sequence ID" value="AAH98255.1"/>
    <property type="molecule type" value="mRNA"/>
</dbReference>
<dbReference type="EMBL" id="BC098277">
    <property type="protein sequence ID" value="AAH98277.1"/>
    <property type="molecule type" value="mRNA"/>
</dbReference>
<dbReference type="EMBL" id="BC098306">
    <property type="protein sequence ID" value="AAH98306.1"/>
    <property type="molecule type" value="mRNA"/>
</dbReference>
<dbReference type="CCDS" id="CCDS2424.1">
    <molecule id="Q9UGI9-1"/>
</dbReference>
<dbReference type="RefSeq" id="NP_059127.2">
    <molecule id="Q9UGI9-1"/>
    <property type="nucleotide sequence ID" value="NM_017431.2"/>
</dbReference>
<dbReference type="RefSeq" id="XP_016859832.1">
    <property type="nucleotide sequence ID" value="XM_017004343.1"/>
</dbReference>
<dbReference type="SMR" id="Q9UGI9"/>
<dbReference type="BioGRID" id="119791">
    <property type="interactions" value="86"/>
</dbReference>
<dbReference type="ComplexPortal" id="CPX-5840">
    <property type="entry name" value="AMPK complex, alpha2-beta2-gamma3 variant"/>
</dbReference>
<dbReference type="ComplexPortal" id="CPX-5841">
    <property type="entry name" value="AMPK complex, alpha1-beta2-gamma3 variant"/>
</dbReference>
<dbReference type="ComplexPortal" id="CPX-5842">
    <property type="entry name" value="AMPK complex, alpha1-beta1-gamma3 variant"/>
</dbReference>
<dbReference type="ComplexPortal" id="CPX-5843">
    <property type="entry name" value="AMPK complex, alpha2-beta1-gamma3 variant"/>
</dbReference>
<dbReference type="CORUM" id="Q9UGI9"/>
<dbReference type="FunCoup" id="Q9UGI9">
    <property type="interactions" value="755"/>
</dbReference>
<dbReference type="IntAct" id="Q9UGI9">
    <property type="interactions" value="57"/>
</dbReference>
<dbReference type="MINT" id="Q9UGI9"/>
<dbReference type="STRING" id="9606.ENSP00000397133"/>
<dbReference type="BindingDB" id="Q9UGI9"/>
<dbReference type="ChEMBL" id="CHEMBL3038452"/>
<dbReference type="ChEMBL" id="CHEMBL3038457"/>
<dbReference type="ChEMBL" id="CHEMBL4106159"/>
<dbReference type="ChEMBL" id="CHEMBL4106162"/>
<dbReference type="DrugBank" id="DB00945">
    <property type="generic name" value="Acetylsalicylic acid"/>
</dbReference>
<dbReference type="DrugBank" id="DB00131">
    <property type="generic name" value="Adenosine phosphate"/>
</dbReference>
<dbReference type="DrugBank" id="DB12010">
    <property type="generic name" value="Fostamatinib"/>
</dbReference>
<dbReference type="DrugBank" id="DB00273">
    <property type="generic name" value="Topiramate"/>
</dbReference>
<dbReference type="GlyGen" id="Q9UGI9">
    <property type="glycosylation" value="1 site, 1 O-linked glycan (1 site)"/>
</dbReference>
<dbReference type="iPTMnet" id="Q9UGI9"/>
<dbReference type="PhosphoSitePlus" id="Q9UGI9"/>
<dbReference type="BioMuta" id="PRKAG3"/>
<dbReference type="DMDM" id="85681287"/>
<dbReference type="jPOST" id="Q9UGI9"/>
<dbReference type="MassIVE" id="Q9UGI9"/>
<dbReference type="PaxDb" id="9606-ENSP00000397133"/>
<dbReference type="PeptideAtlas" id="Q9UGI9"/>
<dbReference type="ProteomicsDB" id="84220">
    <molecule id="Q9UGI9-1"/>
</dbReference>
<dbReference type="ProteomicsDB" id="84221">
    <molecule id="Q9UGI9-2"/>
</dbReference>
<dbReference type="Antibodypedia" id="1331">
    <property type="antibodies" value="255 antibodies from 25 providers"/>
</dbReference>
<dbReference type="DNASU" id="53632"/>
<dbReference type="Ensembl" id="ENST00000439262.7">
    <molecule id="Q9UGI9-1"/>
    <property type="protein sequence ID" value="ENSP00000397133.3"/>
    <property type="gene ID" value="ENSG00000115592.13"/>
</dbReference>
<dbReference type="Ensembl" id="ENST00000529249.5">
    <molecule id="Q9UGI9-1"/>
    <property type="protein sequence ID" value="ENSP00000436068.1"/>
    <property type="gene ID" value="ENSG00000115592.13"/>
</dbReference>
<dbReference type="GeneID" id="53632"/>
<dbReference type="KEGG" id="hsa:53632"/>
<dbReference type="MANE-Select" id="ENST00000439262.7">
    <property type="protein sequence ID" value="ENSP00000397133.3"/>
    <property type="RefSeq nucleotide sequence ID" value="NM_017431.4"/>
    <property type="RefSeq protein sequence ID" value="NP_059127.2"/>
</dbReference>
<dbReference type="UCSC" id="uc002vjb.2">
    <molecule id="Q9UGI9-1"/>
    <property type="organism name" value="human"/>
</dbReference>
<dbReference type="AGR" id="HGNC:9387"/>
<dbReference type="CTD" id="53632"/>
<dbReference type="DisGeNET" id="53632"/>
<dbReference type="GeneCards" id="PRKAG3"/>
<dbReference type="HGNC" id="HGNC:9387">
    <property type="gene designation" value="PRKAG3"/>
</dbReference>
<dbReference type="HPA" id="ENSG00000115592">
    <property type="expression patterns" value="Tissue enriched (skeletal)"/>
</dbReference>
<dbReference type="MalaCards" id="PRKAG3"/>
<dbReference type="MIM" id="604976">
    <property type="type" value="gene"/>
</dbReference>
<dbReference type="MIM" id="619030">
    <property type="type" value="phenotype"/>
</dbReference>
<dbReference type="neXtProt" id="NX_Q9UGI9"/>
<dbReference type="OpenTargets" id="ENSG00000115592"/>
<dbReference type="PharmGKB" id="PA33753"/>
<dbReference type="VEuPathDB" id="HostDB:ENSG00000115592"/>
<dbReference type="eggNOG" id="KOG1764">
    <property type="taxonomic scope" value="Eukaryota"/>
</dbReference>
<dbReference type="GeneTree" id="ENSGT00950000183019"/>
<dbReference type="HOGENOM" id="CLU_021740_6_0_1"/>
<dbReference type="InParanoid" id="Q9UGI9"/>
<dbReference type="OMA" id="DFIMVLM"/>
<dbReference type="OrthoDB" id="449052at2759"/>
<dbReference type="PAN-GO" id="Q9UGI9">
    <property type="GO annotations" value="9 GO annotations based on evolutionary models"/>
</dbReference>
<dbReference type="PhylomeDB" id="Q9UGI9"/>
<dbReference type="TreeFam" id="TF313247"/>
<dbReference type="BRENDA" id="2.7.11.31">
    <property type="organism ID" value="2681"/>
</dbReference>
<dbReference type="PathwayCommons" id="Q9UGI9"/>
<dbReference type="Reactome" id="R-HSA-1445148">
    <property type="pathway name" value="Translocation of SLC2A4 (GLUT4) to the plasma membrane"/>
</dbReference>
<dbReference type="Reactome" id="R-HSA-1632852">
    <property type="pathway name" value="Macroautophagy"/>
</dbReference>
<dbReference type="Reactome" id="R-HSA-2151209">
    <property type="pathway name" value="Activation of PPARGC1A (PGC-1alpha) by phosphorylation"/>
</dbReference>
<dbReference type="Reactome" id="R-HSA-380972">
    <property type="pathway name" value="Energy dependent regulation of mTOR by LKB1-AMPK"/>
</dbReference>
<dbReference type="Reactome" id="R-HSA-5628897">
    <property type="pathway name" value="TP53 Regulates Metabolic Genes"/>
</dbReference>
<dbReference type="Reactome" id="R-HSA-6804756">
    <property type="pathway name" value="Regulation of TP53 Activity through Phosphorylation"/>
</dbReference>
<dbReference type="Reactome" id="R-HSA-9613354">
    <property type="pathway name" value="Lipophagy"/>
</dbReference>
<dbReference type="Reactome" id="R-HSA-9619483">
    <property type="pathway name" value="Activation of AMPK downstream of NMDARs"/>
</dbReference>
<dbReference type="SignaLink" id="Q9UGI9"/>
<dbReference type="SIGNOR" id="Q9UGI9"/>
<dbReference type="BioGRID-ORCS" id="53632">
    <property type="hits" value="10 hits in 1155 CRISPR screens"/>
</dbReference>
<dbReference type="GeneWiki" id="PRKAG3"/>
<dbReference type="GenomeRNAi" id="53632"/>
<dbReference type="Pharos" id="Q9UGI9">
    <property type="development level" value="Tbio"/>
</dbReference>
<dbReference type="PRO" id="PR:Q9UGI9"/>
<dbReference type="Proteomes" id="UP000005640">
    <property type="component" value="Chromosome 2"/>
</dbReference>
<dbReference type="RNAct" id="Q9UGI9">
    <property type="molecule type" value="protein"/>
</dbReference>
<dbReference type="Bgee" id="ENSG00000115592">
    <property type="expression patterns" value="Expressed in hindlimb stylopod muscle and 77 other cell types or tissues"/>
</dbReference>
<dbReference type="ExpressionAtlas" id="Q9UGI9">
    <property type="expression patterns" value="baseline and differential"/>
</dbReference>
<dbReference type="GO" id="GO:0005737">
    <property type="term" value="C:cytoplasm"/>
    <property type="evidence" value="ECO:0000318"/>
    <property type="project" value="GO_Central"/>
</dbReference>
<dbReference type="GO" id="GO:0005829">
    <property type="term" value="C:cytosol"/>
    <property type="evidence" value="ECO:0000304"/>
    <property type="project" value="Reactome"/>
</dbReference>
<dbReference type="GO" id="GO:0005615">
    <property type="term" value="C:extracellular space"/>
    <property type="evidence" value="ECO:0007005"/>
    <property type="project" value="UniProtKB"/>
</dbReference>
<dbReference type="GO" id="GO:0005654">
    <property type="term" value="C:nucleoplasm"/>
    <property type="evidence" value="ECO:0000304"/>
    <property type="project" value="Reactome"/>
</dbReference>
<dbReference type="GO" id="GO:0031588">
    <property type="term" value="C:nucleotide-activated protein kinase complex"/>
    <property type="evidence" value="ECO:0000353"/>
    <property type="project" value="ComplexPortal"/>
</dbReference>
<dbReference type="GO" id="GO:0005634">
    <property type="term" value="C:nucleus"/>
    <property type="evidence" value="ECO:0000318"/>
    <property type="project" value="GO_Central"/>
</dbReference>
<dbReference type="GO" id="GO:0016208">
    <property type="term" value="F:AMP binding"/>
    <property type="evidence" value="ECO:0000318"/>
    <property type="project" value="GO_Central"/>
</dbReference>
<dbReference type="GO" id="GO:0004679">
    <property type="term" value="F:AMP-activated protein kinase activity"/>
    <property type="evidence" value="ECO:0000304"/>
    <property type="project" value="ProtInc"/>
</dbReference>
<dbReference type="GO" id="GO:0005524">
    <property type="term" value="F:ATP binding"/>
    <property type="evidence" value="ECO:0007669"/>
    <property type="project" value="UniProtKB-KW"/>
</dbReference>
<dbReference type="GO" id="GO:0019901">
    <property type="term" value="F:protein kinase binding"/>
    <property type="evidence" value="ECO:0000314"/>
    <property type="project" value="BHF-UCL"/>
</dbReference>
<dbReference type="GO" id="GO:0019887">
    <property type="term" value="F:protein kinase regulator activity"/>
    <property type="evidence" value="ECO:0000314"/>
    <property type="project" value="UniProtKB"/>
</dbReference>
<dbReference type="GO" id="GO:0042149">
    <property type="term" value="P:cellular response to glucose starvation"/>
    <property type="evidence" value="ECO:0000318"/>
    <property type="project" value="GO_Central"/>
</dbReference>
<dbReference type="GO" id="GO:0031669">
    <property type="term" value="P:cellular response to nutrient levels"/>
    <property type="evidence" value="ECO:0000314"/>
    <property type="project" value="ComplexPortal"/>
</dbReference>
<dbReference type="GO" id="GO:0006633">
    <property type="term" value="P:fatty acid biosynthetic process"/>
    <property type="evidence" value="ECO:0007669"/>
    <property type="project" value="UniProtKB-KW"/>
</dbReference>
<dbReference type="GO" id="GO:0035556">
    <property type="term" value="P:intracellular signal transduction"/>
    <property type="evidence" value="ECO:0000304"/>
    <property type="project" value="ProtInc"/>
</dbReference>
<dbReference type="GO" id="GO:0045719">
    <property type="term" value="P:negative regulation of glycogen biosynthetic process"/>
    <property type="evidence" value="ECO:0007669"/>
    <property type="project" value="Ensembl"/>
</dbReference>
<dbReference type="GO" id="GO:0045722">
    <property type="term" value="P:positive regulation of gluconeogenesis"/>
    <property type="evidence" value="ECO:0000318"/>
    <property type="project" value="GO_Central"/>
</dbReference>
<dbReference type="GO" id="GO:0043609">
    <property type="term" value="P:regulation of carbon utilization"/>
    <property type="evidence" value="ECO:0000318"/>
    <property type="project" value="GO_Central"/>
</dbReference>
<dbReference type="GO" id="GO:0051726">
    <property type="term" value="P:regulation of cell cycle"/>
    <property type="evidence" value="ECO:0000304"/>
    <property type="project" value="Reactome"/>
</dbReference>
<dbReference type="GO" id="GO:0006110">
    <property type="term" value="P:regulation of glycolytic process"/>
    <property type="evidence" value="ECO:0000318"/>
    <property type="project" value="GO_Central"/>
</dbReference>
<dbReference type="GO" id="GO:0014873">
    <property type="term" value="P:response to muscle activity involved in regulation of muscle adaptation"/>
    <property type="evidence" value="ECO:0007669"/>
    <property type="project" value="Ensembl"/>
</dbReference>
<dbReference type="CDD" id="cd04618">
    <property type="entry name" value="CBS_euAMPK_gamma-like_repeat1"/>
    <property type="match status" value="1"/>
</dbReference>
<dbReference type="CDD" id="cd04641">
    <property type="entry name" value="CBS_euAMPK_gamma-like_repeat2"/>
    <property type="match status" value="1"/>
</dbReference>
<dbReference type="FunFam" id="3.10.580.10:FF:000003">
    <property type="entry name" value="Protein kinase AMP-activated non-catalytic subunit gamma 1"/>
    <property type="match status" value="1"/>
</dbReference>
<dbReference type="FunFam" id="3.10.580.10:FF:000004">
    <property type="entry name" value="Protein kinase AMP-activated non-catalytic subunit gamma 2"/>
    <property type="match status" value="1"/>
</dbReference>
<dbReference type="Gene3D" id="3.10.580.10">
    <property type="entry name" value="CBS-domain"/>
    <property type="match status" value="2"/>
</dbReference>
<dbReference type="InterPro" id="IPR050511">
    <property type="entry name" value="AMPK_gamma/SDS23_families"/>
</dbReference>
<dbReference type="InterPro" id="IPR000644">
    <property type="entry name" value="CBS_dom"/>
</dbReference>
<dbReference type="InterPro" id="IPR046342">
    <property type="entry name" value="CBS_dom_sf"/>
</dbReference>
<dbReference type="PANTHER" id="PTHR13780:SF31">
    <property type="entry name" value="5'-AMP-ACTIVATED PROTEIN KINASE SUBUNIT GAMMA-3"/>
    <property type="match status" value="1"/>
</dbReference>
<dbReference type="PANTHER" id="PTHR13780">
    <property type="entry name" value="AMP-ACTIVATED PROTEIN KINASE, GAMMA REGULATORY SUBUNIT"/>
    <property type="match status" value="1"/>
</dbReference>
<dbReference type="Pfam" id="PF00571">
    <property type="entry name" value="CBS"/>
    <property type="match status" value="3"/>
</dbReference>
<dbReference type="SMART" id="SM00116">
    <property type="entry name" value="CBS"/>
    <property type="match status" value="4"/>
</dbReference>
<dbReference type="SUPFAM" id="SSF54631">
    <property type="entry name" value="CBS-domain pair"/>
    <property type="match status" value="2"/>
</dbReference>
<dbReference type="PROSITE" id="PS51371">
    <property type="entry name" value="CBS"/>
    <property type="match status" value="4"/>
</dbReference>